<reference key="1">
    <citation type="submission" date="2007-03" db="EMBL/GenBank/DDBJ databases">
        <title>Complete sequence of chromosome of Methanococcus maripaludis C5.</title>
        <authorList>
            <consortium name="US DOE Joint Genome Institute"/>
            <person name="Copeland A."/>
            <person name="Lucas S."/>
            <person name="Lapidus A."/>
            <person name="Barry K."/>
            <person name="Glavina del Rio T."/>
            <person name="Dalin E."/>
            <person name="Tice H."/>
            <person name="Pitluck S."/>
            <person name="Chertkov O."/>
            <person name="Brettin T."/>
            <person name="Bruce D."/>
            <person name="Han C."/>
            <person name="Detter J.C."/>
            <person name="Schmutz J."/>
            <person name="Larimer F."/>
            <person name="Land M."/>
            <person name="Hauser L."/>
            <person name="Kyrpides N."/>
            <person name="Mikhailova N."/>
            <person name="Sieprawska-Lupa M."/>
            <person name="Whitman W.B."/>
            <person name="Richardson P."/>
        </authorList>
    </citation>
    <scope>NUCLEOTIDE SEQUENCE [LARGE SCALE GENOMIC DNA]</scope>
    <source>
        <strain>C5 / ATCC BAA-1333</strain>
    </source>
</reference>
<protein>
    <recommendedName>
        <fullName evidence="1">Probable tRNA pseudouridine synthase D</fullName>
        <ecNumber evidence="1">5.4.99.27</ecNumber>
    </recommendedName>
    <alternativeName>
        <fullName evidence="1">tRNA pseudouridine(13) synthase</fullName>
    </alternativeName>
    <alternativeName>
        <fullName evidence="1">tRNA pseudouridylate synthase D</fullName>
    </alternativeName>
    <alternativeName>
        <fullName evidence="1">tRNA-uridine isomerase D</fullName>
    </alternativeName>
</protein>
<dbReference type="EC" id="5.4.99.27" evidence="1"/>
<dbReference type="EMBL" id="CP000609">
    <property type="protein sequence ID" value="ABO35296.1"/>
    <property type="molecule type" value="Genomic_DNA"/>
</dbReference>
<dbReference type="SMR" id="A4FYL2"/>
<dbReference type="STRING" id="402880.MmarC5_0990"/>
<dbReference type="KEGG" id="mmq:MmarC5_0990"/>
<dbReference type="eggNOG" id="arCOG04252">
    <property type="taxonomic scope" value="Archaea"/>
</dbReference>
<dbReference type="HOGENOM" id="CLU_005281_4_1_2"/>
<dbReference type="Proteomes" id="UP000000253">
    <property type="component" value="Chromosome"/>
</dbReference>
<dbReference type="GO" id="GO:0003723">
    <property type="term" value="F:RNA binding"/>
    <property type="evidence" value="ECO:0007669"/>
    <property type="project" value="InterPro"/>
</dbReference>
<dbReference type="GO" id="GO:0160150">
    <property type="term" value="F:tRNA pseudouridine(13) synthase activity"/>
    <property type="evidence" value="ECO:0007669"/>
    <property type="project" value="UniProtKB-EC"/>
</dbReference>
<dbReference type="GO" id="GO:0031119">
    <property type="term" value="P:tRNA pseudouridine synthesis"/>
    <property type="evidence" value="ECO:0007669"/>
    <property type="project" value="UniProtKB-UniRule"/>
</dbReference>
<dbReference type="Gene3D" id="3.30.2350.20">
    <property type="entry name" value="TruD, catalytic domain"/>
    <property type="match status" value="2"/>
</dbReference>
<dbReference type="HAMAP" id="MF_01082">
    <property type="entry name" value="TruD"/>
    <property type="match status" value="1"/>
</dbReference>
<dbReference type="InterPro" id="IPR020103">
    <property type="entry name" value="PsdUridine_synth_cat_dom_sf"/>
</dbReference>
<dbReference type="InterPro" id="IPR001656">
    <property type="entry name" value="PsdUridine_synth_TruD"/>
</dbReference>
<dbReference type="InterPro" id="IPR020119">
    <property type="entry name" value="PsdUridine_synth_TruD_CS"/>
</dbReference>
<dbReference type="InterPro" id="IPR011760">
    <property type="entry name" value="PsdUridine_synth_TruD_insert"/>
</dbReference>
<dbReference type="InterPro" id="IPR042214">
    <property type="entry name" value="TruD_catalytic"/>
</dbReference>
<dbReference type="NCBIfam" id="TIGR00094">
    <property type="entry name" value="tRNA_TruD_broad"/>
    <property type="match status" value="1"/>
</dbReference>
<dbReference type="PANTHER" id="PTHR13326">
    <property type="entry name" value="TRNA PSEUDOURIDINE SYNTHASE D"/>
    <property type="match status" value="1"/>
</dbReference>
<dbReference type="PANTHER" id="PTHR13326:SF24">
    <property type="entry name" value="TRUD DOMAIN-CONTAINING PROTEIN"/>
    <property type="match status" value="1"/>
</dbReference>
<dbReference type="Pfam" id="PF01142">
    <property type="entry name" value="TruD"/>
    <property type="match status" value="2"/>
</dbReference>
<dbReference type="PIRSF" id="PIRSF037016">
    <property type="entry name" value="Pseudouridin_synth_euk_prd"/>
    <property type="match status" value="1"/>
</dbReference>
<dbReference type="SUPFAM" id="SSF55120">
    <property type="entry name" value="Pseudouridine synthase"/>
    <property type="match status" value="1"/>
</dbReference>
<dbReference type="PROSITE" id="PS50984">
    <property type="entry name" value="TRUD"/>
    <property type="match status" value="1"/>
</dbReference>
<dbReference type="PROSITE" id="PS01268">
    <property type="entry name" value="UPF0024"/>
    <property type="match status" value="1"/>
</dbReference>
<proteinExistence type="inferred from homology"/>
<organism>
    <name type="scientific">Methanococcus maripaludis (strain C5 / ATCC BAA-1333)</name>
    <dbReference type="NCBI Taxonomy" id="402880"/>
    <lineage>
        <taxon>Archaea</taxon>
        <taxon>Methanobacteriati</taxon>
        <taxon>Methanobacteriota</taxon>
        <taxon>Methanomada group</taxon>
        <taxon>Methanococci</taxon>
        <taxon>Methanococcales</taxon>
        <taxon>Methanococcaceae</taxon>
        <taxon>Methanococcus</taxon>
    </lineage>
</organism>
<comment type="function">
    <text evidence="1">Could be responsible for synthesis of pseudouridine from uracil-13 in transfer RNAs.</text>
</comment>
<comment type="catalytic activity">
    <reaction evidence="1">
        <text>uridine(13) in tRNA = pseudouridine(13) in tRNA</text>
        <dbReference type="Rhea" id="RHEA:42540"/>
        <dbReference type="Rhea" id="RHEA-COMP:10105"/>
        <dbReference type="Rhea" id="RHEA-COMP:10106"/>
        <dbReference type="ChEBI" id="CHEBI:65314"/>
        <dbReference type="ChEBI" id="CHEBI:65315"/>
        <dbReference type="EC" id="5.4.99.27"/>
    </reaction>
</comment>
<comment type="similarity">
    <text evidence="1">Belongs to the pseudouridine synthase TruD family.</text>
</comment>
<evidence type="ECO:0000255" key="1">
    <source>
        <dbReference type="HAMAP-Rule" id="MF_01082"/>
    </source>
</evidence>
<keyword id="KW-0413">Isomerase</keyword>
<keyword id="KW-0819">tRNA processing</keyword>
<feature type="chain" id="PRO_1000084751" description="Probable tRNA pseudouridine synthase D">
    <location>
        <begin position="1"/>
        <end position="390"/>
    </location>
</feature>
<feature type="domain" description="TRUD" evidence="1">
    <location>
        <begin position="166"/>
        <end position="353"/>
    </location>
</feature>
<feature type="active site" description="Nucleophile" evidence="1">
    <location>
        <position position="93"/>
    </location>
</feature>
<gene>
    <name evidence="1" type="primary">truD</name>
    <name type="ordered locus">MmarC5_0990</name>
</gene>
<accession>A4FYL2</accession>
<sequence>MPININKFILDMERFDGTLKKYPEDFIVEEITPEGTVLEVGKEIGFEDVEKWHGSFIHFTVEKTNWNTMDALKQIVRTTKTKRKNFGFAGTKDKFAVTTQRFGCFGLKKEQLENINIKDIVIRDVQKSNKKLRMGDLWGNKFTIKIRGLDLSKKEIKRISDLKLDYVLNYYGIQRFGLIRPITHIVGKFIYERDFESAFYTYCGTPISETGDSLEARQLVDVGEFKKALKLFNRNHDYEKRLIQQYLKYKDFKMAFTALPPQLNSMFVNAYQAYLFNEMINKRFEYGFDAKEGDILEDNTPTGTLIGYNTEFSGGIQGEIEKEIVERENLDLKKFKIEDFGNFYGTRRKMITPIYDFKSSFENDIFELSFKLERGNYATIVTREFTGNLS</sequence>
<name>TRUD_METM5</name>